<evidence type="ECO:0000255" key="1">
    <source>
        <dbReference type="HAMAP-Rule" id="MF_00105"/>
    </source>
</evidence>
<gene>
    <name evidence="1" type="primary">greA</name>
    <name type="ordered locus">FTA_1559</name>
</gene>
<sequence>MANDRVPMTPAGEQALRAELDKLKKIERPAIIEAIAEARDHGDLKENAEYHAARERQGIIEGRIKDIESKLSNAQVIDVTKIQANGMVIFGATVTIMNVDTEEETTYKIVGEDEADIDNQKISVVAPLARALIKKEEGDEITLDTPKGKVTYEIVAVEYK</sequence>
<reference key="1">
    <citation type="journal article" date="2009" name="PLoS ONE">
        <title>Complete genome sequence of Francisella tularensis subspecies holarctica FTNF002-00.</title>
        <authorList>
            <person name="Barabote R.D."/>
            <person name="Xie G."/>
            <person name="Brettin T.S."/>
            <person name="Hinrichs S.H."/>
            <person name="Fey P.D."/>
            <person name="Jay J.J."/>
            <person name="Engle J.L."/>
            <person name="Godbole S.D."/>
            <person name="Noronha J.M."/>
            <person name="Scheuermann R.H."/>
            <person name="Zhou L.W."/>
            <person name="Lion C."/>
            <person name="Dempsey M.P."/>
        </authorList>
    </citation>
    <scope>NUCLEOTIDE SEQUENCE [LARGE SCALE GENOMIC DNA]</scope>
    <source>
        <strain>FTNF002-00 / FTA</strain>
    </source>
</reference>
<comment type="function">
    <text evidence="1">Necessary for efficient RNA polymerase transcription elongation past template-encoded arresting sites. The arresting sites in DNA have the property of trapping a certain fraction of elongating RNA polymerases that pass through, resulting in locked ternary complexes. Cleavage of the nascent transcript by cleavage factors such as GreA or GreB allows the resumption of elongation from the new 3'terminus. GreA releases sequences of 2 to 3 nucleotides.</text>
</comment>
<comment type="similarity">
    <text evidence="1">Belongs to the GreA/GreB family.</text>
</comment>
<protein>
    <recommendedName>
        <fullName evidence="1">Transcription elongation factor GreA</fullName>
    </recommendedName>
    <alternativeName>
        <fullName evidence="1">Transcript cleavage factor GreA</fullName>
    </alternativeName>
</protein>
<name>GREA_FRATF</name>
<proteinExistence type="inferred from homology"/>
<keyword id="KW-0238">DNA-binding</keyword>
<keyword id="KW-0804">Transcription</keyword>
<keyword id="KW-0805">Transcription regulation</keyword>
<accession>A7NDI1</accession>
<feature type="chain" id="PRO_1000202853" description="Transcription elongation factor GreA">
    <location>
        <begin position="1"/>
        <end position="160"/>
    </location>
</feature>
<organism>
    <name type="scientific">Francisella tularensis subsp. holarctica (strain FTNF002-00 / FTA)</name>
    <dbReference type="NCBI Taxonomy" id="458234"/>
    <lineage>
        <taxon>Bacteria</taxon>
        <taxon>Pseudomonadati</taxon>
        <taxon>Pseudomonadota</taxon>
        <taxon>Gammaproteobacteria</taxon>
        <taxon>Thiotrichales</taxon>
        <taxon>Francisellaceae</taxon>
        <taxon>Francisella</taxon>
    </lineage>
</organism>
<dbReference type="EMBL" id="CP000803">
    <property type="protein sequence ID" value="ABU62034.1"/>
    <property type="molecule type" value="Genomic_DNA"/>
</dbReference>
<dbReference type="RefSeq" id="WP_003016773.1">
    <property type="nucleotide sequence ID" value="NC_009749.1"/>
</dbReference>
<dbReference type="SMR" id="A7NDI1"/>
<dbReference type="KEGG" id="fta:FTA_1559"/>
<dbReference type="HOGENOM" id="CLU_101379_2_0_6"/>
<dbReference type="GO" id="GO:0003677">
    <property type="term" value="F:DNA binding"/>
    <property type="evidence" value="ECO:0007669"/>
    <property type="project" value="UniProtKB-UniRule"/>
</dbReference>
<dbReference type="GO" id="GO:0070063">
    <property type="term" value="F:RNA polymerase binding"/>
    <property type="evidence" value="ECO:0007669"/>
    <property type="project" value="InterPro"/>
</dbReference>
<dbReference type="GO" id="GO:0006354">
    <property type="term" value="P:DNA-templated transcription elongation"/>
    <property type="evidence" value="ECO:0007669"/>
    <property type="project" value="TreeGrafter"/>
</dbReference>
<dbReference type="GO" id="GO:0032784">
    <property type="term" value="P:regulation of DNA-templated transcription elongation"/>
    <property type="evidence" value="ECO:0007669"/>
    <property type="project" value="UniProtKB-UniRule"/>
</dbReference>
<dbReference type="FunFam" id="1.10.287.180:FF:000001">
    <property type="entry name" value="Transcription elongation factor GreA"/>
    <property type="match status" value="1"/>
</dbReference>
<dbReference type="FunFam" id="3.10.50.30:FF:000001">
    <property type="entry name" value="Transcription elongation factor GreA"/>
    <property type="match status" value="1"/>
</dbReference>
<dbReference type="Gene3D" id="3.10.50.30">
    <property type="entry name" value="Transcription elongation factor, GreA/GreB, C-terminal domain"/>
    <property type="match status" value="1"/>
</dbReference>
<dbReference type="Gene3D" id="1.10.287.180">
    <property type="entry name" value="Transcription elongation factor, GreA/GreB, N-terminal domain"/>
    <property type="match status" value="1"/>
</dbReference>
<dbReference type="HAMAP" id="MF_00105">
    <property type="entry name" value="GreA_GreB"/>
    <property type="match status" value="1"/>
</dbReference>
<dbReference type="InterPro" id="IPR036953">
    <property type="entry name" value="GreA/GreB_C_sf"/>
</dbReference>
<dbReference type="InterPro" id="IPR018151">
    <property type="entry name" value="TF_GreA/GreB_CS"/>
</dbReference>
<dbReference type="InterPro" id="IPR006359">
    <property type="entry name" value="Tscrpt_elong_fac_GreA"/>
</dbReference>
<dbReference type="InterPro" id="IPR028624">
    <property type="entry name" value="Tscrpt_elong_fac_GreA/B"/>
</dbReference>
<dbReference type="InterPro" id="IPR001437">
    <property type="entry name" value="Tscrpt_elong_fac_GreA/B_C"/>
</dbReference>
<dbReference type="InterPro" id="IPR023459">
    <property type="entry name" value="Tscrpt_elong_fac_GreA/B_fam"/>
</dbReference>
<dbReference type="InterPro" id="IPR022691">
    <property type="entry name" value="Tscrpt_elong_fac_GreA/B_N"/>
</dbReference>
<dbReference type="InterPro" id="IPR036805">
    <property type="entry name" value="Tscrpt_elong_fac_GreA/B_N_sf"/>
</dbReference>
<dbReference type="NCBIfam" id="TIGR01462">
    <property type="entry name" value="greA"/>
    <property type="match status" value="1"/>
</dbReference>
<dbReference type="NCBIfam" id="NF001261">
    <property type="entry name" value="PRK00226.1-2"/>
    <property type="match status" value="1"/>
</dbReference>
<dbReference type="NCBIfam" id="NF001263">
    <property type="entry name" value="PRK00226.1-4"/>
    <property type="match status" value="1"/>
</dbReference>
<dbReference type="NCBIfam" id="NF001264">
    <property type="entry name" value="PRK00226.1-5"/>
    <property type="match status" value="1"/>
</dbReference>
<dbReference type="PANTHER" id="PTHR30437">
    <property type="entry name" value="TRANSCRIPTION ELONGATION FACTOR GREA"/>
    <property type="match status" value="1"/>
</dbReference>
<dbReference type="PANTHER" id="PTHR30437:SF4">
    <property type="entry name" value="TRANSCRIPTION ELONGATION FACTOR GREA"/>
    <property type="match status" value="1"/>
</dbReference>
<dbReference type="Pfam" id="PF01272">
    <property type="entry name" value="GreA_GreB"/>
    <property type="match status" value="1"/>
</dbReference>
<dbReference type="Pfam" id="PF03449">
    <property type="entry name" value="GreA_GreB_N"/>
    <property type="match status" value="1"/>
</dbReference>
<dbReference type="PIRSF" id="PIRSF006092">
    <property type="entry name" value="GreA_GreB"/>
    <property type="match status" value="1"/>
</dbReference>
<dbReference type="SUPFAM" id="SSF54534">
    <property type="entry name" value="FKBP-like"/>
    <property type="match status" value="1"/>
</dbReference>
<dbReference type="SUPFAM" id="SSF46557">
    <property type="entry name" value="GreA transcript cleavage protein, N-terminal domain"/>
    <property type="match status" value="1"/>
</dbReference>
<dbReference type="PROSITE" id="PS00829">
    <property type="entry name" value="GREAB_1"/>
    <property type="match status" value="1"/>
</dbReference>